<organism>
    <name type="scientific">Methanococcus vannielii (strain ATCC 35089 / DSM 1224 / JCM 13029 / OCM 148 / SB)</name>
    <dbReference type="NCBI Taxonomy" id="406327"/>
    <lineage>
        <taxon>Archaea</taxon>
        <taxon>Methanobacteriati</taxon>
        <taxon>Methanobacteriota</taxon>
        <taxon>Methanomada group</taxon>
        <taxon>Methanococci</taxon>
        <taxon>Methanococcales</taxon>
        <taxon>Methanococcaceae</taxon>
        <taxon>Methanococcus</taxon>
    </lineage>
</organism>
<dbReference type="EMBL" id="CP000742">
    <property type="protein sequence ID" value="ABR54498.1"/>
    <property type="molecule type" value="Genomic_DNA"/>
</dbReference>
<dbReference type="RefSeq" id="WP_011972401.1">
    <property type="nucleotide sequence ID" value="NC_009634.1"/>
</dbReference>
<dbReference type="SMR" id="A6UPS6"/>
<dbReference type="STRING" id="406327.Mevan_0592"/>
<dbReference type="GeneID" id="5326112"/>
<dbReference type="KEGG" id="mvn:Mevan_0592"/>
<dbReference type="eggNOG" id="arCOG01045">
    <property type="taxonomic scope" value="Archaea"/>
</dbReference>
<dbReference type="HOGENOM" id="CLU_096329_1_0_2"/>
<dbReference type="OrthoDB" id="85381at2157"/>
<dbReference type="Proteomes" id="UP000001107">
    <property type="component" value="Chromosome"/>
</dbReference>
<dbReference type="GO" id="GO:0005524">
    <property type="term" value="F:ATP binding"/>
    <property type="evidence" value="ECO:0007669"/>
    <property type="project" value="UniProtKB-UniRule"/>
</dbReference>
<dbReference type="Gene3D" id="3.40.50.300">
    <property type="entry name" value="P-loop containing nucleotide triphosphate hydrolases"/>
    <property type="match status" value="1"/>
</dbReference>
<dbReference type="HAMAP" id="MF_01111">
    <property type="entry name" value="UPF0200"/>
    <property type="match status" value="1"/>
</dbReference>
<dbReference type="InterPro" id="IPR022970">
    <property type="entry name" value="NTP_hydrolase-rel"/>
</dbReference>
<dbReference type="InterPro" id="IPR027417">
    <property type="entry name" value="P-loop_NTPase"/>
</dbReference>
<dbReference type="PANTHER" id="PTHR41930:SF1">
    <property type="entry name" value="DEPHOSPHO-COA KINASE"/>
    <property type="match status" value="1"/>
</dbReference>
<dbReference type="PANTHER" id="PTHR41930">
    <property type="entry name" value="UPF0200 PROTEIN MJ1399"/>
    <property type="match status" value="1"/>
</dbReference>
<dbReference type="Pfam" id="PF13207">
    <property type="entry name" value="AAA_17"/>
    <property type="match status" value="1"/>
</dbReference>
<dbReference type="SUPFAM" id="SSF52540">
    <property type="entry name" value="P-loop containing nucleoside triphosphate hydrolases"/>
    <property type="match status" value="1"/>
</dbReference>
<proteinExistence type="inferred from homology"/>
<protein>
    <recommendedName>
        <fullName evidence="1">UPF0200 protein Mevan_0592</fullName>
    </recommendedName>
</protein>
<evidence type="ECO:0000255" key="1">
    <source>
        <dbReference type="HAMAP-Rule" id="MF_01111"/>
    </source>
</evidence>
<reference key="1">
    <citation type="submission" date="2007-06" db="EMBL/GenBank/DDBJ databases">
        <title>Complete sequence of Methanococcus vannielii SB.</title>
        <authorList>
            <consortium name="US DOE Joint Genome Institute"/>
            <person name="Copeland A."/>
            <person name="Lucas S."/>
            <person name="Lapidus A."/>
            <person name="Barry K."/>
            <person name="Glavina del Rio T."/>
            <person name="Dalin E."/>
            <person name="Tice H."/>
            <person name="Pitluck S."/>
            <person name="Chain P."/>
            <person name="Malfatti S."/>
            <person name="Shin M."/>
            <person name="Vergez L."/>
            <person name="Schmutz J."/>
            <person name="Larimer F."/>
            <person name="Land M."/>
            <person name="Hauser L."/>
            <person name="Kyrpides N."/>
            <person name="Anderson I."/>
            <person name="Sieprawska-Lupa M."/>
            <person name="Whitman W.B."/>
            <person name="Richardson P."/>
        </authorList>
    </citation>
    <scope>NUCLEOTIDE SEQUENCE [LARGE SCALE GENOMIC DNA]</scope>
    <source>
        <strain>ATCC 35089 / DSM 1224 / JCM 13029 / OCM 148 / SB</strain>
    </source>
</reference>
<gene>
    <name type="ordered locus">Mevan_0592</name>
</gene>
<comment type="similarity">
    <text evidence="1">Belongs to the UPF0200 family.</text>
</comment>
<name>Y592_METVS</name>
<feature type="chain" id="PRO_1000065151" description="UPF0200 protein Mevan_0592">
    <location>
        <begin position="1"/>
        <end position="185"/>
    </location>
</feature>
<feature type="binding site" evidence="1">
    <location>
        <begin position="8"/>
        <end position="15"/>
    </location>
    <ligand>
        <name>ATP</name>
        <dbReference type="ChEBI" id="CHEBI:30616"/>
    </ligand>
</feature>
<accession>A6UPS6</accession>
<keyword id="KW-0067">ATP-binding</keyword>
<keyword id="KW-0547">Nucleotide-binding</keyword>
<sequence>MKLIGITGMPGSGKSAIINLAKENNIPVVSMGDIVRHETLKQGLILNPENVGKTAIFLRKLHGKEAIVVPCLKYIFEKYKNEKFVVIEGIRSIYEVNYLKKHVFLEIIAIHSSPKTRFERLSARNREDDSNSLDTFIERDNRELDFSIGSVISLADYVVVNEEEYDKFLENLNSLLKKIIMNVDE</sequence>